<name>MTAL1_YEAST</name>
<keyword id="KW-0010">Activator</keyword>
<keyword id="KW-0238">DNA-binding</keyword>
<keyword id="KW-0539">Nucleus</keyword>
<keyword id="KW-1185">Reference proteome</keyword>
<keyword id="KW-0804">Transcription</keyword>
<keyword id="KW-0805">Transcription regulation</keyword>
<dbReference type="EMBL" id="L00060">
    <property type="protein sequence ID" value="AAA34763.1"/>
    <property type="molecule type" value="Genomic_DNA"/>
</dbReference>
<dbReference type="EMBL" id="X63853">
    <property type="protein sequence ID" value="CAA45336.1"/>
    <property type="molecule type" value="Genomic_DNA"/>
</dbReference>
<dbReference type="EMBL" id="X59720">
    <property type="protein sequence ID" value="CAA42401.1"/>
    <property type="molecule type" value="Genomic_DNA"/>
</dbReference>
<dbReference type="EMBL" id="AY692791">
    <property type="protein sequence ID" value="AAT92810.1"/>
    <property type="molecule type" value="Genomic_DNA"/>
</dbReference>
<dbReference type="EMBL" id="BK006937">
    <property type="protein sequence ID" value="DAA07422.1"/>
    <property type="molecule type" value="Genomic_DNA"/>
</dbReference>
<dbReference type="PIR" id="S19397">
    <property type="entry name" value="JFBYA1"/>
</dbReference>
<dbReference type="RefSeq" id="NP_009869.3">
    <property type="nucleotide sequence ID" value="NM_001178754.1"/>
</dbReference>
<dbReference type="BioGRID" id="30923">
    <property type="interactions" value="7"/>
</dbReference>
<dbReference type="BioGRID" id="31023">
    <property type="interactions" value="4"/>
</dbReference>
<dbReference type="ComplexPortal" id="CPX-693">
    <property type="entry name" value="Mating-type MATalpha1-MCM1 complex"/>
</dbReference>
<dbReference type="FunCoup" id="P0CY06">
    <property type="interactions" value="67"/>
</dbReference>
<dbReference type="IntAct" id="P0CY06">
    <property type="interactions" value="5"/>
</dbReference>
<dbReference type="MINT" id="P0CY06"/>
<dbReference type="iPTMnet" id="P0CY06"/>
<dbReference type="PeptideAtlas" id="P0CY06"/>
<dbReference type="EnsemblFungi" id="YCL066W_mRNA">
    <property type="protein sequence ID" value="YCL066W"/>
    <property type="gene ID" value="YCL066W"/>
</dbReference>
<dbReference type="EnsemblFungi" id="YCR040W_mRNA">
    <property type="protein sequence ID" value="YCR040W"/>
    <property type="gene ID" value="YCR040W"/>
</dbReference>
<dbReference type="GeneID" id="850407"/>
<dbReference type="KEGG" id="sce:YCL066W"/>
<dbReference type="KEGG" id="sce:YCR040W"/>
<dbReference type="AGR" id="SGD:S000000636"/>
<dbReference type="SGD" id="S000000636">
    <property type="gene designation" value="MATALPHA1"/>
</dbReference>
<dbReference type="VEuPathDB" id="FungiDB:YCL066W"/>
<dbReference type="VEuPathDB" id="FungiDB:YCR040W"/>
<dbReference type="HOGENOM" id="CLU_118234_0_0_1"/>
<dbReference type="InParanoid" id="P0CY06"/>
<dbReference type="OMA" id="MSSTIYC"/>
<dbReference type="OrthoDB" id="5398665at2759"/>
<dbReference type="BioCyc" id="YEAST:G3O-29352-MONOMER"/>
<dbReference type="PRO" id="PR:P0CY06"/>
<dbReference type="Proteomes" id="UP000002311">
    <property type="component" value="Chromosome III"/>
</dbReference>
<dbReference type="RNAct" id="P0CY06">
    <property type="molecule type" value="protein"/>
</dbReference>
<dbReference type="GO" id="GO:0005634">
    <property type="term" value="C:nucleus"/>
    <property type="evidence" value="ECO:0000305"/>
    <property type="project" value="SGD"/>
</dbReference>
<dbReference type="GO" id="GO:0090575">
    <property type="term" value="C:RNA polymerase II transcription regulator complex"/>
    <property type="evidence" value="ECO:0000353"/>
    <property type="project" value="ComplexPortal"/>
</dbReference>
<dbReference type="GO" id="GO:0008301">
    <property type="term" value="F:DNA binding, bending"/>
    <property type="evidence" value="ECO:0000314"/>
    <property type="project" value="SGD"/>
</dbReference>
<dbReference type="GO" id="GO:0003713">
    <property type="term" value="F:transcription coactivator activity"/>
    <property type="evidence" value="ECO:0000315"/>
    <property type="project" value="SGD"/>
</dbReference>
<dbReference type="GO" id="GO:0045895">
    <property type="term" value="P:positive regulation of mating-type specific transcription, DNA-templated"/>
    <property type="evidence" value="ECO:0007669"/>
    <property type="project" value="InterPro"/>
</dbReference>
<dbReference type="GO" id="GO:0007532">
    <property type="term" value="P:regulation of mating-type specific transcription, DNA-templated"/>
    <property type="evidence" value="ECO:0000315"/>
    <property type="project" value="SGD"/>
</dbReference>
<dbReference type="GO" id="GO:0006357">
    <property type="term" value="P:regulation of transcription by RNA polymerase II"/>
    <property type="evidence" value="ECO:0000315"/>
    <property type="project" value="SGD"/>
</dbReference>
<dbReference type="InterPro" id="IPR006856">
    <property type="entry name" value="MATalpha_HMGbox"/>
</dbReference>
<dbReference type="Pfam" id="PF04769">
    <property type="entry name" value="MATalpha_HMGbox"/>
    <property type="match status" value="1"/>
</dbReference>
<dbReference type="PROSITE" id="PS51325">
    <property type="entry name" value="ALPHA_BOX"/>
    <property type="match status" value="1"/>
</dbReference>
<proteinExistence type="evidence at protein level"/>
<sequence>MFTSKPAFKIKNKASKSYRNTAVSKKLKEKRLAEHVRPSCFNIIRPLKKDIQIPVPSSRFLNKIQIHRIASGSQNTQFRQFNKTSIKSSKKYLNSFMAFRAYYSQFGSGVKQNVLSSLLAEEWHADKMQHGIWDYFAQQYNFINPGFGFVEWLTNNYAEVRGDGYWEDVFVHLAL</sequence>
<accession>P0CY06</accession>
<accession>D6VQV3</accession>
<accession>P01365</accession>
<evidence type="ECO:0000255" key="1">
    <source>
        <dbReference type="PROSITE-ProRule" id="PRU00655"/>
    </source>
</evidence>
<evidence type="ECO:0000269" key="2">
    <source>
    </source>
</evidence>
<evidence type="ECO:0000269" key="3">
    <source>
    </source>
</evidence>
<evidence type="ECO:0000269" key="4">
    <source>
    </source>
</evidence>
<comment type="function">
    <text evidence="4">Mating type proteins are sequence specific DNA-binding proteins that act as master switches in yeast differentiation by controlling gene expression in a cell type-specific fashion. Transcriptional coactivator that, in alpha-cells, binds cooperatively with MCM1 and STE12 to a DNA sequence termed the QP' element, to activate the transcription of alpha-specific genes.</text>
</comment>
<comment type="subunit">
    <text evidence="2 3">Binds DNA with a high specificity in complex with an MCM1 dimer. Interacts with STE12.</text>
</comment>
<comment type="interaction">
    <interactant intactId="EBI-10438">
        <id>P0CY06</id>
    </interactant>
    <interactant intactId="EBI-18264">
        <id>P13574</id>
        <label>STE12</label>
    </interactant>
    <organismsDiffer>false</organismsDiffer>
    <experiments>2</experiments>
</comment>
<comment type="subcellular location">
    <subcellularLocation>
        <location evidence="1">Nucleus</location>
    </subcellularLocation>
</comment>
<comment type="developmental stage">
    <text>Only present in alpha-cells.</text>
</comment>
<comment type="induction">
    <text>Repressed in a/alpha diploid cells by A1/ALPHA2.</text>
</comment>
<comment type="miscellaneous">
    <text>There are three genetic loci for mating type genes in S.cerevisiae. MAT is the expression locus that determines the mating type of the cell, whereas HML (containing HMLALPHA1 and HMLALPHA2) and HMR (containing HMRA1 and HMRA2) represent silenced repositories of mating type information. The mating type is determined by the MAT locus, which contains either a copy of HML or of HMR. Diploid cells are usually heterozygous for the MAT locus.</text>
</comment>
<comment type="similarity">
    <text evidence="1">Belongs to the MATALPHA1 family.</text>
</comment>
<gene>
    <name type="primary">MATALPHA1</name>
    <name type="synonym">ALPHA-1</name>
    <name type="synonym">MAT1A</name>
    <name type="synonym">MATAL1</name>
    <name type="ordered locus">YCR040W</name>
    <name type="ORF">YCR40W</name>
</gene>
<organism>
    <name type="scientific">Saccharomyces cerevisiae (strain ATCC 204508 / S288c)</name>
    <name type="common">Baker's yeast</name>
    <dbReference type="NCBI Taxonomy" id="559292"/>
    <lineage>
        <taxon>Eukaryota</taxon>
        <taxon>Fungi</taxon>
        <taxon>Dikarya</taxon>
        <taxon>Ascomycota</taxon>
        <taxon>Saccharomycotina</taxon>
        <taxon>Saccharomycetes</taxon>
        <taxon>Saccharomycetales</taxon>
        <taxon>Saccharomycetaceae</taxon>
        <taxon>Saccharomyces</taxon>
    </lineage>
</organism>
<feature type="chain" id="PRO_0000096610" description="Mating-type protein ALPHA1">
    <location>
        <begin position="1"/>
        <end position="175"/>
    </location>
</feature>
<feature type="DNA-binding region" description="Alpha box" evidence="1">
    <location>
        <begin position="88"/>
        <end position="144"/>
    </location>
</feature>
<reference key="1">
    <citation type="journal article" date="1981" name="Cold Spring Harb. Symp. Quant. Biol.">
        <title>Physical analysis of mating-type loci in Saccharomyces cerevisiae.</title>
        <authorList>
            <person name="Nasmyth K.A."/>
            <person name="Tatchell K."/>
            <person name="Hall B.D."/>
            <person name="Astell C."/>
            <person name="Smith M."/>
        </authorList>
    </citation>
    <scope>NUCLEOTIDE SEQUENCE [GENOMIC DNA]</scope>
</reference>
<reference key="2">
    <citation type="journal article" date="1991" name="Yeast">
        <title>The MAT locus revisited within a 9.8 kb fragment of chromosome III containing BUD5 and two new open reading frames.</title>
        <authorList>
            <person name="Jacquet M."/>
            <person name="Buhler J.-M."/>
            <person name="Iborra F."/>
            <person name="Francingues-Gaillard M.-C."/>
            <person name="Soustelle C."/>
        </authorList>
    </citation>
    <scope>NUCLEOTIDE SEQUENCE [GENOMIC DNA]</scope>
</reference>
<reference key="3">
    <citation type="journal article" date="1992" name="Nature">
        <title>The complete DNA sequence of yeast chromosome III.</title>
        <authorList>
            <person name="Oliver S.G."/>
            <person name="van der Aart Q.J.M."/>
            <person name="Agostoni-Carbone M.L."/>
            <person name="Aigle M."/>
            <person name="Alberghina L."/>
            <person name="Alexandraki D."/>
            <person name="Antoine G."/>
            <person name="Anwar R."/>
            <person name="Ballesta J.P.G."/>
            <person name="Benit P."/>
            <person name="Berben G."/>
            <person name="Bergantino E."/>
            <person name="Biteau N."/>
            <person name="Bolle P.-A."/>
            <person name="Bolotin-Fukuhara M."/>
            <person name="Brown A."/>
            <person name="Brown A.J.P."/>
            <person name="Buhler J.-M."/>
            <person name="Carcano C."/>
            <person name="Carignani G."/>
            <person name="Cederberg H."/>
            <person name="Chanet R."/>
            <person name="Contreras R."/>
            <person name="Crouzet M."/>
            <person name="Daignan-Fornier B."/>
            <person name="Defoor E."/>
            <person name="Delgado M.D."/>
            <person name="Demolder J."/>
            <person name="Doira C."/>
            <person name="Dubois E."/>
            <person name="Dujon B."/>
            <person name="Duesterhoeft A."/>
            <person name="Erdmann D."/>
            <person name="Esteban M."/>
            <person name="Fabre F."/>
            <person name="Fairhead C."/>
            <person name="Faye G."/>
            <person name="Feldmann H."/>
            <person name="Fiers W."/>
            <person name="Francingues-Gaillard M.-C."/>
            <person name="Franco L."/>
            <person name="Frontali L."/>
            <person name="Fukuhara H."/>
            <person name="Fuller L.J."/>
            <person name="Galland P."/>
            <person name="Gent M.E."/>
            <person name="Gigot D."/>
            <person name="Gilliquet V."/>
            <person name="Glansdorff N."/>
            <person name="Goffeau A."/>
            <person name="Grenson M."/>
            <person name="Grisanti P."/>
            <person name="Grivell L.A."/>
            <person name="de Haan M."/>
            <person name="Haasemann M."/>
            <person name="Hatat D."/>
            <person name="Hoenicka J."/>
            <person name="Hegemann J.H."/>
            <person name="Herbert C.J."/>
            <person name="Hilger F."/>
            <person name="Hohmann S."/>
            <person name="Hollenberg C.P."/>
            <person name="Huse K."/>
            <person name="Iborra F."/>
            <person name="Indge K.J."/>
            <person name="Isono K."/>
            <person name="Jacq C."/>
            <person name="Jacquet M."/>
            <person name="James C.M."/>
            <person name="Jauniaux J.-C."/>
            <person name="Jia Y."/>
            <person name="Jimenez A."/>
            <person name="Kelly A."/>
            <person name="Kleinhans U."/>
            <person name="Kreisl P."/>
            <person name="Lanfranchi G."/>
            <person name="Lewis C."/>
            <person name="van der Linden C.G."/>
            <person name="Lucchini G."/>
            <person name="Lutzenkirchen K."/>
            <person name="Maat M.J."/>
            <person name="Mallet L."/>
            <person name="Mannhaupt G."/>
            <person name="Martegani E."/>
            <person name="Mathieu A."/>
            <person name="Maurer C.T.C."/>
            <person name="McConnell D."/>
            <person name="McKee R.A."/>
            <person name="Messenguy F."/>
            <person name="Mewes H.-W."/>
            <person name="Molemans F."/>
            <person name="Montague M.A."/>
            <person name="Muzi Falconi M."/>
            <person name="Navas L."/>
            <person name="Newlon C.S."/>
            <person name="Noone D."/>
            <person name="Pallier C."/>
            <person name="Panzeri L."/>
            <person name="Pearson B.M."/>
            <person name="Perea J."/>
            <person name="Philippsen P."/>
            <person name="Pierard A."/>
            <person name="Planta R.J."/>
            <person name="Plevani P."/>
            <person name="Poetsch B."/>
            <person name="Pohl F.M."/>
            <person name="Purnelle B."/>
            <person name="Ramezani Rad M."/>
            <person name="Rasmussen S.W."/>
            <person name="Raynal A."/>
            <person name="Remacha M.A."/>
            <person name="Richterich P."/>
            <person name="Roberts A.B."/>
            <person name="Rodriguez F."/>
            <person name="Sanz E."/>
            <person name="Schaaff-Gerstenschlaeger I."/>
            <person name="Scherens B."/>
            <person name="Schweitzer B."/>
            <person name="Shu Y."/>
            <person name="Skala J."/>
            <person name="Slonimski P.P."/>
            <person name="Sor F."/>
            <person name="Soustelle C."/>
            <person name="Spiegelberg R."/>
            <person name="Stateva L.I."/>
            <person name="Steensma H.Y."/>
            <person name="Steiner S."/>
            <person name="Thierry A."/>
            <person name="Thireos G."/>
            <person name="Tzermia M."/>
            <person name="Urrestarazu L.A."/>
            <person name="Valle G."/>
            <person name="Vetter I."/>
            <person name="van Vliet-Reedijk J.C."/>
            <person name="Voet M."/>
            <person name="Volckaert G."/>
            <person name="Vreken P."/>
            <person name="Wang H."/>
            <person name="Warmington J.R."/>
            <person name="von Wettstein D."/>
            <person name="Wicksteed B.L."/>
            <person name="Wilson C."/>
            <person name="Wurst H."/>
            <person name="Xu G."/>
            <person name="Yoshikawa A."/>
            <person name="Zimmermann F.K."/>
            <person name="Sgouros J.G."/>
        </authorList>
    </citation>
    <scope>NUCLEOTIDE SEQUENCE [LARGE SCALE GENOMIC DNA]</scope>
    <source>
        <strain>ATCC 204508 / S288c</strain>
    </source>
</reference>
<reference key="4">
    <citation type="journal article" date="2014" name="G3 (Bethesda)">
        <title>The reference genome sequence of Saccharomyces cerevisiae: Then and now.</title>
        <authorList>
            <person name="Engel S.R."/>
            <person name="Dietrich F.S."/>
            <person name="Fisk D.G."/>
            <person name="Binkley G."/>
            <person name="Balakrishnan R."/>
            <person name="Costanzo M.C."/>
            <person name="Dwight S.S."/>
            <person name="Hitz B.C."/>
            <person name="Karra K."/>
            <person name="Nash R.S."/>
            <person name="Weng S."/>
            <person name="Wong E.D."/>
            <person name="Lloyd P."/>
            <person name="Skrzypek M.S."/>
            <person name="Miyasato S.R."/>
            <person name="Simison M."/>
            <person name="Cherry J.M."/>
        </authorList>
    </citation>
    <scope>GENOME REANNOTATION</scope>
    <source>
        <strain>ATCC 204508 / S288c</strain>
    </source>
</reference>
<reference key="5">
    <citation type="journal article" date="2007" name="Genome Res.">
        <title>Approaching a complete repository of sequence-verified protein-encoding clones for Saccharomyces cerevisiae.</title>
        <authorList>
            <person name="Hu Y."/>
            <person name="Rolfs A."/>
            <person name="Bhullar B."/>
            <person name="Murthy T.V.S."/>
            <person name="Zhu C."/>
            <person name="Berger M.F."/>
            <person name="Camargo A.A."/>
            <person name="Kelley F."/>
            <person name="McCarron S."/>
            <person name="Jepson D."/>
            <person name="Richardson A."/>
            <person name="Raphael J."/>
            <person name="Moreira D."/>
            <person name="Taycher E."/>
            <person name="Zuo D."/>
            <person name="Mohr S."/>
            <person name="Kane M.F."/>
            <person name="Williamson J."/>
            <person name="Simpson A.J.G."/>
            <person name="Bulyk M.L."/>
            <person name="Harlow E."/>
            <person name="Marsischky G."/>
            <person name="Kolodner R.D."/>
            <person name="LaBaer J."/>
        </authorList>
    </citation>
    <scope>NUCLEOTIDE SEQUENCE [GENOMIC DNA]</scope>
    <source>
        <strain>ATCC 204508 / S288c</strain>
    </source>
</reference>
<reference key="6">
    <citation type="journal article" date="1993" name="Mol. Cell. Biol.">
        <title>Transcription of alpha-specific genes in Saccharomyces cerevisiae: DNA sequence requirements for activity of the coregulator alpha 1.</title>
        <authorList>
            <person name="Hagen D.C."/>
            <person name="Bruhn L."/>
            <person name="Westby C.A."/>
            <person name="Sprague G.F. Jr."/>
        </authorList>
    </citation>
    <scope>DNA-BINDING SPECIFICITY</scope>
</reference>
<reference key="7">
    <citation type="journal article" date="1991" name="EMBO J.">
        <title>The DNA binding and oligomerization domain of MCM1 is sufficient for its interaction with other regulatory proteins.</title>
        <authorList>
            <person name="Primig M."/>
            <person name="Winkler H."/>
            <person name="Ammerer G."/>
        </authorList>
    </citation>
    <scope>INTERACTION WITH MCM1</scope>
</reference>
<reference key="8">
    <citation type="journal article" date="1993" name="Genes Dev.">
        <title>Coupling of cell identity to signal response in yeast: interaction between the alpha-1 and STE12 proteins.</title>
        <authorList>
            <person name="Yuan Y.-L.O."/>
            <person name="Stroke I."/>
            <person name="Fields S."/>
        </authorList>
    </citation>
    <scope>INTERACTION WITH STE12</scope>
</reference>
<reference key="9">
    <citation type="journal article" date="1995" name="Curr. Opin. Genet. Dev.">
        <title>Molecular mechanisms of cell-type determination in budding yeast.</title>
        <authorList>
            <person name="Johnson A.D."/>
        </authorList>
    </citation>
    <scope>FUNCTION IN MATING-TYPE REGULATION</scope>
</reference>
<protein>
    <recommendedName>
        <fullName>Mating-type protein ALPHA1</fullName>
        <shortName>MATalpha1 protein</shortName>
    </recommendedName>
    <alternativeName>
        <fullName>Alpha-1 activator</fullName>
    </alternativeName>
</protein>